<proteinExistence type="inferred from homology"/>
<dbReference type="EC" id="2.9.1.1" evidence="1"/>
<dbReference type="EMBL" id="CU928160">
    <property type="protein sequence ID" value="CAR00556.1"/>
    <property type="molecule type" value="Genomic_DNA"/>
</dbReference>
<dbReference type="RefSeq" id="WP_000206275.1">
    <property type="nucleotide sequence ID" value="NC_011741.1"/>
</dbReference>
<dbReference type="SMR" id="B7M3L6"/>
<dbReference type="GeneID" id="75204641"/>
<dbReference type="KEGG" id="ecr:ECIAI1_3759"/>
<dbReference type="HOGENOM" id="CLU_038142_1_0_6"/>
<dbReference type="UniPathway" id="UPA00906">
    <property type="reaction ID" value="UER00896"/>
</dbReference>
<dbReference type="GO" id="GO:0005737">
    <property type="term" value="C:cytoplasm"/>
    <property type="evidence" value="ECO:0007669"/>
    <property type="project" value="UniProtKB-SubCell"/>
</dbReference>
<dbReference type="GO" id="GO:0004125">
    <property type="term" value="F:L-seryl-tRNA(Sec) selenium transferase activity"/>
    <property type="evidence" value="ECO:0007669"/>
    <property type="project" value="UniProtKB-UniRule"/>
</dbReference>
<dbReference type="GO" id="GO:0001717">
    <property type="term" value="P:conversion of seryl-tRNAsec to selenocys-tRNAsec"/>
    <property type="evidence" value="ECO:0007669"/>
    <property type="project" value="UniProtKB-UniRule"/>
</dbReference>
<dbReference type="GO" id="GO:0001514">
    <property type="term" value="P:selenocysteine incorporation"/>
    <property type="evidence" value="ECO:0007669"/>
    <property type="project" value="UniProtKB-UniRule"/>
</dbReference>
<dbReference type="FunFam" id="3.40.640.10:FF:000028">
    <property type="entry name" value="L-seryl-tRNA(Sec) selenium transferase"/>
    <property type="match status" value="1"/>
</dbReference>
<dbReference type="FunFam" id="3.90.1150.180:FF:000001">
    <property type="entry name" value="L-seryl-tRNA(Sec) selenium transferase"/>
    <property type="match status" value="1"/>
</dbReference>
<dbReference type="Gene3D" id="3.90.1150.180">
    <property type="match status" value="1"/>
</dbReference>
<dbReference type="Gene3D" id="3.40.640.10">
    <property type="entry name" value="Type I PLP-dependent aspartate aminotransferase-like (Major domain)"/>
    <property type="match status" value="1"/>
</dbReference>
<dbReference type="HAMAP" id="MF_00423">
    <property type="entry name" value="SelA"/>
    <property type="match status" value="1"/>
</dbReference>
<dbReference type="InterPro" id="IPR015424">
    <property type="entry name" value="PyrdxlP-dep_Trfase"/>
</dbReference>
<dbReference type="InterPro" id="IPR015421">
    <property type="entry name" value="PyrdxlP-dep_Trfase_major"/>
</dbReference>
<dbReference type="InterPro" id="IPR018319">
    <property type="entry name" value="SelA-like"/>
</dbReference>
<dbReference type="InterPro" id="IPR004534">
    <property type="entry name" value="SelA_trans"/>
</dbReference>
<dbReference type="InterPro" id="IPR025862">
    <property type="entry name" value="SelA_trans_N_dom"/>
</dbReference>
<dbReference type="NCBIfam" id="TIGR00474">
    <property type="entry name" value="selA"/>
    <property type="match status" value="1"/>
</dbReference>
<dbReference type="PANTHER" id="PTHR32328">
    <property type="entry name" value="L-SERYL-TRNA(SEC) SELENIUM TRANSFERASE"/>
    <property type="match status" value="1"/>
</dbReference>
<dbReference type="PANTHER" id="PTHR32328:SF0">
    <property type="entry name" value="L-SERYL-TRNA(SEC) SELENIUM TRANSFERASE"/>
    <property type="match status" value="1"/>
</dbReference>
<dbReference type="Pfam" id="PF12390">
    <property type="entry name" value="Se-cys_synth_N"/>
    <property type="match status" value="1"/>
</dbReference>
<dbReference type="Pfam" id="PF03841">
    <property type="entry name" value="SelA"/>
    <property type="match status" value="1"/>
</dbReference>
<dbReference type="SUPFAM" id="SSF53383">
    <property type="entry name" value="PLP-dependent transferases"/>
    <property type="match status" value="1"/>
</dbReference>
<reference key="1">
    <citation type="journal article" date="2009" name="PLoS Genet.">
        <title>Organised genome dynamics in the Escherichia coli species results in highly diverse adaptive paths.</title>
        <authorList>
            <person name="Touchon M."/>
            <person name="Hoede C."/>
            <person name="Tenaillon O."/>
            <person name="Barbe V."/>
            <person name="Baeriswyl S."/>
            <person name="Bidet P."/>
            <person name="Bingen E."/>
            <person name="Bonacorsi S."/>
            <person name="Bouchier C."/>
            <person name="Bouvet O."/>
            <person name="Calteau A."/>
            <person name="Chiapello H."/>
            <person name="Clermont O."/>
            <person name="Cruveiller S."/>
            <person name="Danchin A."/>
            <person name="Diard M."/>
            <person name="Dossat C."/>
            <person name="Karoui M.E."/>
            <person name="Frapy E."/>
            <person name="Garry L."/>
            <person name="Ghigo J.M."/>
            <person name="Gilles A.M."/>
            <person name="Johnson J."/>
            <person name="Le Bouguenec C."/>
            <person name="Lescat M."/>
            <person name="Mangenot S."/>
            <person name="Martinez-Jehanne V."/>
            <person name="Matic I."/>
            <person name="Nassif X."/>
            <person name="Oztas S."/>
            <person name="Petit M.A."/>
            <person name="Pichon C."/>
            <person name="Rouy Z."/>
            <person name="Ruf C.S."/>
            <person name="Schneider D."/>
            <person name="Tourret J."/>
            <person name="Vacherie B."/>
            <person name="Vallenet D."/>
            <person name="Medigue C."/>
            <person name="Rocha E.P.C."/>
            <person name="Denamur E."/>
        </authorList>
    </citation>
    <scope>NUCLEOTIDE SEQUENCE [LARGE SCALE GENOMIC DNA]</scope>
    <source>
        <strain>IAI1</strain>
    </source>
</reference>
<comment type="function">
    <text evidence="1">Converts seryl-tRNA(Sec) to selenocysteinyl-tRNA(Sec) required for selenoprotein biosynthesis.</text>
</comment>
<comment type="catalytic activity">
    <reaction evidence="1">
        <text>L-seryl-tRNA(Sec) + selenophosphate + H(+) = L-selenocysteinyl-tRNA(Sec) + phosphate</text>
        <dbReference type="Rhea" id="RHEA:22728"/>
        <dbReference type="Rhea" id="RHEA-COMP:9742"/>
        <dbReference type="Rhea" id="RHEA-COMP:9743"/>
        <dbReference type="ChEBI" id="CHEBI:15378"/>
        <dbReference type="ChEBI" id="CHEBI:16144"/>
        <dbReference type="ChEBI" id="CHEBI:43474"/>
        <dbReference type="ChEBI" id="CHEBI:78533"/>
        <dbReference type="ChEBI" id="CHEBI:78573"/>
        <dbReference type="EC" id="2.9.1.1"/>
    </reaction>
</comment>
<comment type="cofactor">
    <cofactor evidence="1">
        <name>pyridoxal 5'-phosphate</name>
        <dbReference type="ChEBI" id="CHEBI:597326"/>
    </cofactor>
</comment>
<comment type="pathway">
    <text evidence="1">Aminoacyl-tRNA biosynthesis; selenocysteinyl-tRNA(Sec) biosynthesis; selenocysteinyl-tRNA(Sec) from L-seryl-tRNA(Sec) (bacterial route): step 1/1.</text>
</comment>
<comment type="subunit">
    <text evidence="1">Homodecamer; pentamer of dimers. Binds only one seryl-tRNA(Sec) per dimer.</text>
</comment>
<comment type="subcellular location">
    <subcellularLocation>
        <location evidence="1">Cytoplasm</location>
    </subcellularLocation>
</comment>
<comment type="similarity">
    <text evidence="1">Belongs to the SelA family.</text>
</comment>
<keyword id="KW-0963">Cytoplasm</keyword>
<keyword id="KW-0648">Protein biosynthesis</keyword>
<keyword id="KW-0663">Pyridoxal phosphate</keyword>
<keyword id="KW-0711">Selenium</keyword>
<keyword id="KW-0808">Transferase</keyword>
<name>SELA_ECO8A</name>
<protein>
    <recommendedName>
        <fullName evidence="1">L-seryl-tRNA(Sec) selenium transferase</fullName>
        <ecNumber evidence="1">2.9.1.1</ecNumber>
    </recommendedName>
    <alternativeName>
        <fullName evidence="1">Selenocysteine synthase</fullName>
        <shortName evidence="1">Sec synthase</shortName>
    </alternativeName>
    <alternativeName>
        <fullName evidence="1">Selenocysteinyl-tRNA(Sec) synthase</fullName>
    </alternativeName>
</protein>
<evidence type="ECO:0000255" key="1">
    <source>
        <dbReference type="HAMAP-Rule" id="MF_00423"/>
    </source>
</evidence>
<organism>
    <name type="scientific">Escherichia coli O8 (strain IAI1)</name>
    <dbReference type="NCBI Taxonomy" id="585034"/>
    <lineage>
        <taxon>Bacteria</taxon>
        <taxon>Pseudomonadati</taxon>
        <taxon>Pseudomonadota</taxon>
        <taxon>Gammaproteobacteria</taxon>
        <taxon>Enterobacterales</taxon>
        <taxon>Enterobacteriaceae</taxon>
        <taxon>Escherichia</taxon>
    </lineage>
</organism>
<gene>
    <name evidence="1" type="primary">selA</name>
    <name type="ordered locus">ECIAI1_3759</name>
</gene>
<feature type="chain" id="PRO_1000124140" description="L-seryl-tRNA(Sec) selenium transferase">
    <location>
        <begin position="1"/>
        <end position="463"/>
    </location>
</feature>
<feature type="modified residue" description="N6-(pyridoxal phosphate)lysine" evidence="1">
    <location>
        <position position="295"/>
    </location>
</feature>
<accession>B7M3L6</accession>
<sequence>MTTETRSLYSQLPAIDRLLRDSSFLSLRDTYGHTRVVELLRQMLDEAREVIRGSQTLPAWCENWAQEVDARLTKEAQSALRPVINLTGTVLHTNLGRALQAEAAVEAVAQAMRSPVTLEYDLDDAGRGHRDRALAQLLCRITGAEDACIVNNNAAAVLLMLAATASGKEVVVSRGELVEIGGAFRIPDVMRQAGCTLHEVGTTNRTHANDYRQAVNENTALLMKVHTSNYSIQGFTKAIDEAELVALGKELDVPVVTDLGSGSLVDLSQYGLPKEPMPQELIAAGVSLVSFSGDKLLGGPQAGIIVGKKEMIARLQSHPLKRALRADKMTLAALEATLRLYLHPEALSEKLPTLRLLTRSAEVIQIQAQRLQAPLAAHYGAEFAVQVMPCLSQIGSGSLPVDRLPSAALTFTPHDGRGSHLESLAARWRELPVPVIGRIYDGRLWLDLRCLEDEQRFLEMLLK</sequence>